<accession>A3MM38</accession>
<keyword id="KW-0963">Cytoplasm</keyword>
<keyword id="KW-0275">Fatty acid biosynthesis</keyword>
<keyword id="KW-0276">Fatty acid metabolism</keyword>
<keyword id="KW-0444">Lipid biosynthesis</keyword>
<keyword id="KW-0443">Lipid metabolism</keyword>
<keyword id="KW-0460">Magnesium</keyword>
<keyword id="KW-0479">Metal-binding</keyword>
<keyword id="KW-0808">Transferase</keyword>
<protein>
    <recommendedName>
        <fullName evidence="1">Holo-[acyl-carrier-protein] synthase</fullName>
        <shortName evidence="1">Holo-ACP synthase</shortName>
        <ecNumber evidence="1">2.7.8.7</ecNumber>
    </recommendedName>
    <alternativeName>
        <fullName evidence="1">4'-phosphopantetheinyl transferase AcpS</fullName>
    </alternativeName>
</protein>
<evidence type="ECO:0000255" key="1">
    <source>
        <dbReference type="HAMAP-Rule" id="MF_00101"/>
    </source>
</evidence>
<gene>
    <name evidence="1" type="primary">acpS</name>
    <name type="ordered locus">BMA10247_1785</name>
</gene>
<organism>
    <name type="scientific">Burkholderia mallei (strain NCTC 10247)</name>
    <dbReference type="NCBI Taxonomy" id="320389"/>
    <lineage>
        <taxon>Bacteria</taxon>
        <taxon>Pseudomonadati</taxon>
        <taxon>Pseudomonadota</taxon>
        <taxon>Betaproteobacteria</taxon>
        <taxon>Burkholderiales</taxon>
        <taxon>Burkholderiaceae</taxon>
        <taxon>Burkholderia</taxon>
        <taxon>pseudomallei group</taxon>
    </lineage>
</organism>
<name>ACPS_BURM7</name>
<reference key="1">
    <citation type="journal article" date="2010" name="Genome Biol. Evol.">
        <title>Continuing evolution of Burkholderia mallei through genome reduction and large-scale rearrangements.</title>
        <authorList>
            <person name="Losada L."/>
            <person name="Ronning C.M."/>
            <person name="DeShazer D."/>
            <person name="Woods D."/>
            <person name="Fedorova N."/>
            <person name="Kim H.S."/>
            <person name="Shabalina S.A."/>
            <person name="Pearson T.R."/>
            <person name="Brinkac L."/>
            <person name="Tan P."/>
            <person name="Nandi T."/>
            <person name="Crabtree J."/>
            <person name="Badger J."/>
            <person name="Beckstrom-Sternberg S."/>
            <person name="Saqib M."/>
            <person name="Schutzer S.E."/>
            <person name="Keim P."/>
            <person name="Nierman W.C."/>
        </authorList>
    </citation>
    <scope>NUCLEOTIDE SEQUENCE [LARGE SCALE GENOMIC DNA]</scope>
    <source>
        <strain>NCTC 10247</strain>
    </source>
</reference>
<comment type="function">
    <text evidence="1">Transfers the 4'-phosphopantetheine moiety from coenzyme A to a Ser of acyl-carrier-protein.</text>
</comment>
<comment type="catalytic activity">
    <reaction evidence="1">
        <text>apo-[ACP] + CoA = holo-[ACP] + adenosine 3',5'-bisphosphate + H(+)</text>
        <dbReference type="Rhea" id="RHEA:12068"/>
        <dbReference type="Rhea" id="RHEA-COMP:9685"/>
        <dbReference type="Rhea" id="RHEA-COMP:9690"/>
        <dbReference type="ChEBI" id="CHEBI:15378"/>
        <dbReference type="ChEBI" id="CHEBI:29999"/>
        <dbReference type="ChEBI" id="CHEBI:57287"/>
        <dbReference type="ChEBI" id="CHEBI:58343"/>
        <dbReference type="ChEBI" id="CHEBI:64479"/>
        <dbReference type="EC" id="2.7.8.7"/>
    </reaction>
</comment>
<comment type="cofactor">
    <cofactor evidence="1">
        <name>Mg(2+)</name>
        <dbReference type="ChEBI" id="CHEBI:18420"/>
    </cofactor>
</comment>
<comment type="subcellular location">
    <subcellularLocation>
        <location evidence="1">Cytoplasm</location>
    </subcellularLocation>
</comment>
<comment type="similarity">
    <text evidence="1">Belongs to the P-Pant transferase superfamily. AcpS family.</text>
</comment>
<dbReference type="EC" id="2.7.8.7" evidence="1"/>
<dbReference type="EMBL" id="CP000548">
    <property type="protein sequence ID" value="ABO06371.1"/>
    <property type="molecule type" value="Genomic_DNA"/>
</dbReference>
<dbReference type="RefSeq" id="WP_004191194.1">
    <property type="nucleotide sequence ID" value="NZ_CP007802.1"/>
</dbReference>
<dbReference type="SMR" id="A3MM38"/>
<dbReference type="GeneID" id="93061005"/>
<dbReference type="KEGG" id="bmaz:BM44_1414"/>
<dbReference type="KEGG" id="bmn:BMA10247_1785"/>
<dbReference type="PATRIC" id="fig|320389.8.peg.1575"/>
<dbReference type="GO" id="GO:0005737">
    <property type="term" value="C:cytoplasm"/>
    <property type="evidence" value="ECO:0007669"/>
    <property type="project" value="UniProtKB-SubCell"/>
</dbReference>
<dbReference type="GO" id="GO:0008897">
    <property type="term" value="F:holo-[acyl-carrier-protein] synthase activity"/>
    <property type="evidence" value="ECO:0007669"/>
    <property type="project" value="UniProtKB-UniRule"/>
</dbReference>
<dbReference type="GO" id="GO:0000287">
    <property type="term" value="F:magnesium ion binding"/>
    <property type="evidence" value="ECO:0007669"/>
    <property type="project" value="UniProtKB-UniRule"/>
</dbReference>
<dbReference type="GO" id="GO:0006633">
    <property type="term" value="P:fatty acid biosynthetic process"/>
    <property type="evidence" value="ECO:0007669"/>
    <property type="project" value="UniProtKB-UniRule"/>
</dbReference>
<dbReference type="Gene3D" id="3.90.470.20">
    <property type="entry name" value="4'-phosphopantetheinyl transferase domain"/>
    <property type="match status" value="1"/>
</dbReference>
<dbReference type="HAMAP" id="MF_00101">
    <property type="entry name" value="AcpS"/>
    <property type="match status" value="1"/>
</dbReference>
<dbReference type="InterPro" id="IPR008278">
    <property type="entry name" value="4-PPantetheinyl_Trfase_dom"/>
</dbReference>
<dbReference type="InterPro" id="IPR037143">
    <property type="entry name" value="4-PPantetheinyl_Trfase_dom_sf"/>
</dbReference>
<dbReference type="InterPro" id="IPR002582">
    <property type="entry name" value="ACPS"/>
</dbReference>
<dbReference type="InterPro" id="IPR004568">
    <property type="entry name" value="Ppantetheine-prot_Trfase_dom"/>
</dbReference>
<dbReference type="NCBIfam" id="TIGR00516">
    <property type="entry name" value="acpS"/>
    <property type="match status" value="1"/>
</dbReference>
<dbReference type="NCBIfam" id="TIGR00556">
    <property type="entry name" value="pantethn_trn"/>
    <property type="match status" value="1"/>
</dbReference>
<dbReference type="Pfam" id="PF01648">
    <property type="entry name" value="ACPS"/>
    <property type="match status" value="1"/>
</dbReference>
<dbReference type="SUPFAM" id="SSF56214">
    <property type="entry name" value="4'-phosphopantetheinyl transferase"/>
    <property type="match status" value="1"/>
</dbReference>
<sequence length="143" mass="15364">MAIYGIGTDLAQVSRIAAVLERTGGRFAEKVLGPDELRVFHARRARSEARGIAFLATRFSAKEAFSKAIGLGMHWPMTWRALQTLNRPSGEPYVVASGELAAWLDARGITARVTVSDERDYAVTFVVAEAPDDVAAARSGAAS</sequence>
<feature type="chain" id="PRO_1000008397" description="Holo-[acyl-carrier-protein] synthase">
    <location>
        <begin position="1"/>
        <end position="143"/>
    </location>
</feature>
<feature type="binding site" evidence="1">
    <location>
        <position position="9"/>
    </location>
    <ligand>
        <name>Mg(2+)</name>
        <dbReference type="ChEBI" id="CHEBI:18420"/>
    </ligand>
</feature>
<feature type="binding site" evidence="1">
    <location>
        <position position="63"/>
    </location>
    <ligand>
        <name>Mg(2+)</name>
        <dbReference type="ChEBI" id="CHEBI:18420"/>
    </ligand>
</feature>
<proteinExistence type="inferred from homology"/>